<organism>
    <name type="scientific">Campylobacter jejuni subsp. jejuni serotype O:2 (strain ATCC 700819 / NCTC 11168)</name>
    <dbReference type="NCBI Taxonomy" id="192222"/>
    <lineage>
        <taxon>Bacteria</taxon>
        <taxon>Pseudomonadati</taxon>
        <taxon>Campylobacterota</taxon>
        <taxon>Epsilonproteobacteria</taxon>
        <taxon>Campylobacterales</taxon>
        <taxon>Campylobacteraceae</taxon>
        <taxon>Campylobacter</taxon>
    </lineage>
</organism>
<gene>
    <name evidence="1" type="primary">radA</name>
    <name type="ordered locus">Cj1205c</name>
</gene>
<name>RADA_CAMJE</name>
<proteinExistence type="inferred from homology"/>
<feature type="chain" id="PRO_0000187922" description="DNA repair protein RadA">
    <location>
        <begin position="1"/>
        <end position="446"/>
    </location>
</feature>
<feature type="zinc finger region" description="C4-type" evidence="1">
    <location>
        <begin position="10"/>
        <end position="27"/>
    </location>
</feature>
<feature type="region of interest" description="Lon-protease-like" evidence="1">
    <location>
        <begin position="349"/>
        <end position="446"/>
    </location>
</feature>
<feature type="short sequence motif" description="RadA KNRFG motif" evidence="1">
    <location>
        <begin position="253"/>
        <end position="257"/>
    </location>
</feature>
<feature type="binding site" evidence="1">
    <location>
        <begin position="96"/>
        <end position="103"/>
    </location>
    <ligand>
        <name>ATP</name>
        <dbReference type="ChEBI" id="CHEBI:30616"/>
    </ligand>
</feature>
<protein>
    <recommendedName>
        <fullName evidence="1">DNA repair protein RadA</fullName>
        <ecNumber evidence="1">3.6.4.-</ecNumber>
    </recommendedName>
    <alternativeName>
        <fullName evidence="1">Branch migration protein RadA</fullName>
    </alternativeName>
</protein>
<accession>Q9PN90</accession>
<accession>Q0P951</accession>
<keyword id="KW-0067">ATP-binding</keyword>
<keyword id="KW-0227">DNA damage</keyword>
<keyword id="KW-0234">DNA repair</keyword>
<keyword id="KW-0238">DNA-binding</keyword>
<keyword id="KW-0378">Hydrolase</keyword>
<keyword id="KW-0479">Metal-binding</keyword>
<keyword id="KW-0547">Nucleotide-binding</keyword>
<keyword id="KW-1185">Reference proteome</keyword>
<keyword id="KW-0346">Stress response</keyword>
<keyword id="KW-0862">Zinc</keyword>
<keyword id="KW-0863">Zinc-finger</keyword>
<reference key="1">
    <citation type="journal article" date="2000" name="Nature">
        <title>The genome sequence of the food-borne pathogen Campylobacter jejuni reveals hypervariable sequences.</title>
        <authorList>
            <person name="Parkhill J."/>
            <person name="Wren B.W."/>
            <person name="Mungall K.L."/>
            <person name="Ketley J.M."/>
            <person name="Churcher C.M."/>
            <person name="Basham D."/>
            <person name="Chillingworth T."/>
            <person name="Davies R.M."/>
            <person name="Feltwell T."/>
            <person name="Holroyd S."/>
            <person name="Jagels K."/>
            <person name="Karlyshev A.V."/>
            <person name="Moule S."/>
            <person name="Pallen M.J."/>
            <person name="Penn C.W."/>
            <person name="Quail M.A."/>
            <person name="Rajandream M.A."/>
            <person name="Rutherford K.M."/>
            <person name="van Vliet A.H.M."/>
            <person name="Whitehead S."/>
            <person name="Barrell B.G."/>
        </authorList>
    </citation>
    <scope>NUCLEOTIDE SEQUENCE [LARGE SCALE GENOMIC DNA]</scope>
    <source>
        <strain>ATCC 700819 / NCTC 11168</strain>
    </source>
</reference>
<dbReference type="EC" id="3.6.4.-" evidence="1"/>
<dbReference type="EMBL" id="AL111168">
    <property type="protein sequence ID" value="CAL35320.1"/>
    <property type="molecule type" value="Genomic_DNA"/>
</dbReference>
<dbReference type="PIR" id="G81326">
    <property type="entry name" value="G81326"/>
</dbReference>
<dbReference type="RefSeq" id="WP_002858434.1">
    <property type="nucleotide sequence ID" value="NZ_SZUC01000001.1"/>
</dbReference>
<dbReference type="RefSeq" id="YP_002344596.1">
    <property type="nucleotide sequence ID" value="NC_002163.1"/>
</dbReference>
<dbReference type="SMR" id="Q9PN90"/>
<dbReference type="IntAct" id="Q9PN90">
    <property type="interactions" value="4"/>
</dbReference>
<dbReference type="STRING" id="192222.Cj1205c"/>
<dbReference type="MEROPS" id="S16.A04"/>
<dbReference type="PaxDb" id="192222-Cj1205c"/>
<dbReference type="EnsemblBacteria" id="CAL35320">
    <property type="protein sequence ID" value="CAL35320"/>
    <property type="gene ID" value="Cj1205c"/>
</dbReference>
<dbReference type="GeneID" id="905495"/>
<dbReference type="KEGG" id="cje:Cj1205c"/>
<dbReference type="PATRIC" id="fig|192222.6.peg.1186"/>
<dbReference type="eggNOG" id="COG1066">
    <property type="taxonomic scope" value="Bacteria"/>
</dbReference>
<dbReference type="HOGENOM" id="CLU_018264_0_1_7"/>
<dbReference type="OrthoDB" id="9803906at2"/>
<dbReference type="Proteomes" id="UP000000799">
    <property type="component" value="Chromosome"/>
</dbReference>
<dbReference type="GO" id="GO:0005829">
    <property type="term" value="C:cytosol"/>
    <property type="evidence" value="ECO:0007669"/>
    <property type="project" value="TreeGrafter"/>
</dbReference>
<dbReference type="GO" id="GO:0005524">
    <property type="term" value="F:ATP binding"/>
    <property type="evidence" value="ECO:0007669"/>
    <property type="project" value="UniProtKB-UniRule"/>
</dbReference>
<dbReference type="GO" id="GO:0016887">
    <property type="term" value="F:ATP hydrolysis activity"/>
    <property type="evidence" value="ECO:0007669"/>
    <property type="project" value="InterPro"/>
</dbReference>
<dbReference type="GO" id="GO:0140664">
    <property type="term" value="F:ATP-dependent DNA damage sensor activity"/>
    <property type="evidence" value="ECO:0007669"/>
    <property type="project" value="InterPro"/>
</dbReference>
<dbReference type="GO" id="GO:0003684">
    <property type="term" value="F:damaged DNA binding"/>
    <property type="evidence" value="ECO:0007669"/>
    <property type="project" value="InterPro"/>
</dbReference>
<dbReference type="GO" id="GO:0008270">
    <property type="term" value="F:zinc ion binding"/>
    <property type="evidence" value="ECO:0007669"/>
    <property type="project" value="UniProtKB-KW"/>
</dbReference>
<dbReference type="GO" id="GO:0000725">
    <property type="term" value="P:recombinational repair"/>
    <property type="evidence" value="ECO:0007669"/>
    <property type="project" value="UniProtKB-UniRule"/>
</dbReference>
<dbReference type="CDD" id="cd01121">
    <property type="entry name" value="RadA_SMS_N"/>
    <property type="match status" value="1"/>
</dbReference>
<dbReference type="FunFam" id="3.40.50.300:FF:000050">
    <property type="entry name" value="DNA repair protein RadA"/>
    <property type="match status" value="1"/>
</dbReference>
<dbReference type="Gene3D" id="3.30.230.10">
    <property type="match status" value="1"/>
</dbReference>
<dbReference type="Gene3D" id="3.40.50.300">
    <property type="entry name" value="P-loop containing nucleotide triphosphate hydrolases"/>
    <property type="match status" value="1"/>
</dbReference>
<dbReference type="HAMAP" id="MF_01498">
    <property type="entry name" value="RadA_bact"/>
    <property type="match status" value="1"/>
</dbReference>
<dbReference type="InterPro" id="IPR003593">
    <property type="entry name" value="AAA+_ATPase"/>
</dbReference>
<dbReference type="InterPro" id="IPR004504">
    <property type="entry name" value="DNA_repair_RadA"/>
</dbReference>
<dbReference type="InterPro" id="IPR027417">
    <property type="entry name" value="P-loop_NTPase"/>
</dbReference>
<dbReference type="InterPro" id="IPR020588">
    <property type="entry name" value="RecA_ATP-bd"/>
</dbReference>
<dbReference type="InterPro" id="IPR020568">
    <property type="entry name" value="Ribosomal_Su5_D2-typ_SF"/>
</dbReference>
<dbReference type="InterPro" id="IPR014721">
    <property type="entry name" value="Ribsml_uS5_D2-typ_fold_subgr"/>
</dbReference>
<dbReference type="InterPro" id="IPR041166">
    <property type="entry name" value="Rubredoxin_2"/>
</dbReference>
<dbReference type="NCBIfam" id="TIGR00416">
    <property type="entry name" value="sms"/>
    <property type="match status" value="1"/>
</dbReference>
<dbReference type="PANTHER" id="PTHR32472">
    <property type="entry name" value="DNA REPAIR PROTEIN RADA"/>
    <property type="match status" value="1"/>
</dbReference>
<dbReference type="PANTHER" id="PTHR32472:SF10">
    <property type="entry name" value="DNA REPAIR PROTEIN RADA-LIKE PROTEIN"/>
    <property type="match status" value="1"/>
</dbReference>
<dbReference type="Pfam" id="PF13481">
    <property type="entry name" value="AAA_25"/>
    <property type="match status" value="1"/>
</dbReference>
<dbReference type="Pfam" id="PF13541">
    <property type="entry name" value="ChlI"/>
    <property type="match status" value="1"/>
</dbReference>
<dbReference type="Pfam" id="PF18073">
    <property type="entry name" value="Zn_ribbon_LapB"/>
    <property type="match status" value="1"/>
</dbReference>
<dbReference type="PRINTS" id="PR01874">
    <property type="entry name" value="DNAREPAIRADA"/>
</dbReference>
<dbReference type="SMART" id="SM00382">
    <property type="entry name" value="AAA"/>
    <property type="match status" value="1"/>
</dbReference>
<dbReference type="SUPFAM" id="SSF52540">
    <property type="entry name" value="P-loop containing nucleoside triphosphate hydrolases"/>
    <property type="match status" value="1"/>
</dbReference>
<dbReference type="SUPFAM" id="SSF54211">
    <property type="entry name" value="Ribosomal protein S5 domain 2-like"/>
    <property type="match status" value="1"/>
</dbReference>
<dbReference type="PROSITE" id="PS50162">
    <property type="entry name" value="RECA_2"/>
    <property type="match status" value="1"/>
</dbReference>
<sequence>MAKNKALFECQACGNQQSKWLGKCPDCGAWDSFVELKAEQIKVLKELAQVSMKTSEAVCIEDVELEHFTRYSTDDNELDLVLGGGLVEGSLVLIGGSPGVGKSTLLLKIASNLAKQGKKVLYVSGEESKAQIKLRADRLEANTPNLFLLTELCLENILEELHKKDYSILIVDSIQTLYSNKITSAAGSITQVREITFELMRVSKAYNISTFIIGHITKEGAIAGPRVLEHMVDVVLYFEGDATKEIRLLRGFKNRFGGTNEVGIFEMTAKGLISAKDLANRFFTRGKAISGSALGVVMEGSRALVLEVQALVCESSYPKRSATGYEKNRLDMLLALLERKLEIPLGHYDVFVNISGGVKVSETAADLAVVAAIISSFKNRPLSKDSIFIGELSLNGEIREVFSLDTRLKEAKMQKFKNAIVPSKPLEDIGLKCFVAKELSQVLEWM</sequence>
<comment type="function">
    <text evidence="1">DNA-dependent ATPase involved in processing of recombination intermediates, plays a role in repairing DNA breaks. Stimulates the branch migration of RecA-mediated strand transfer reactions, allowing the 3' invading strand to extend heteroduplex DNA faster. Binds ssDNA in the presence of ADP but not other nucleotides, has ATPase activity that is stimulated by ssDNA and various branched DNA structures, but inhibited by SSB. Does not have RecA's homology-searching function.</text>
</comment>
<comment type="domain">
    <text evidence="1">Has a putative N-terminal zinc-finger, a middle region with homology to RecA with ATPase motifs including the RadA KNRFG motif, while the C-terminus is homologous to Lon protease.</text>
</comment>
<comment type="similarity">
    <text evidence="1">Belongs to the RecA family. RadA subfamily.</text>
</comment>
<evidence type="ECO:0000255" key="1">
    <source>
        <dbReference type="HAMAP-Rule" id="MF_01498"/>
    </source>
</evidence>